<keyword id="KW-0046">Antibiotic resistance</keyword>
<keyword id="KW-0342">GTP-binding</keyword>
<keyword id="KW-0547">Nucleotide-binding</keyword>
<keyword id="KW-0648">Protein biosynthesis</keyword>
<evidence type="ECO:0000250" key="1"/>
<evidence type="ECO:0000255" key="2">
    <source>
        <dbReference type="PROSITE-ProRule" id="PRU01059"/>
    </source>
</evidence>
<dbReference type="EMBL" id="L33696">
    <property type="protein sequence ID" value="AAA62400.1"/>
    <property type="molecule type" value="Genomic_DNA"/>
</dbReference>
<dbReference type="SMR" id="Q52360"/>
<dbReference type="KEGG" id="ag:AAA62400"/>
<dbReference type="GO" id="GO:0005525">
    <property type="term" value="F:GTP binding"/>
    <property type="evidence" value="ECO:0007669"/>
    <property type="project" value="UniProtKB-KW"/>
</dbReference>
<dbReference type="GO" id="GO:0003924">
    <property type="term" value="F:GTPase activity"/>
    <property type="evidence" value="ECO:0007669"/>
    <property type="project" value="InterPro"/>
</dbReference>
<dbReference type="GO" id="GO:0046677">
    <property type="term" value="P:response to antibiotic"/>
    <property type="evidence" value="ECO:0007669"/>
    <property type="project" value="UniProtKB-KW"/>
</dbReference>
<dbReference type="GO" id="GO:0032790">
    <property type="term" value="P:ribosome disassembly"/>
    <property type="evidence" value="ECO:0007669"/>
    <property type="project" value="TreeGrafter"/>
</dbReference>
<dbReference type="GO" id="GO:0006412">
    <property type="term" value="P:translation"/>
    <property type="evidence" value="ECO:0007669"/>
    <property type="project" value="UniProtKB-KW"/>
</dbReference>
<dbReference type="CDD" id="cd03711">
    <property type="entry name" value="Tet_C"/>
    <property type="match status" value="1"/>
</dbReference>
<dbReference type="CDD" id="cd03690">
    <property type="entry name" value="Tet_II"/>
    <property type="match status" value="1"/>
</dbReference>
<dbReference type="CDD" id="cd16258">
    <property type="entry name" value="Tet_III"/>
    <property type="match status" value="1"/>
</dbReference>
<dbReference type="CDD" id="cd01684">
    <property type="entry name" value="Tet_like_IV"/>
    <property type="match status" value="1"/>
</dbReference>
<dbReference type="CDD" id="cd04168">
    <property type="entry name" value="TetM_like"/>
    <property type="match status" value="1"/>
</dbReference>
<dbReference type="Gene3D" id="3.30.230.10">
    <property type="match status" value="1"/>
</dbReference>
<dbReference type="Gene3D" id="3.30.70.240">
    <property type="match status" value="1"/>
</dbReference>
<dbReference type="Gene3D" id="3.30.70.870">
    <property type="entry name" value="Elongation Factor G (Translational Gtpase), domain 3"/>
    <property type="match status" value="1"/>
</dbReference>
<dbReference type="Gene3D" id="3.40.50.300">
    <property type="entry name" value="P-loop containing nucleotide triphosphate hydrolases"/>
    <property type="match status" value="1"/>
</dbReference>
<dbReference type="Gene3D" id="2.40.30.10">
    <property type="entry name" value="Translation factors"/>
    <property type="match status" value="1"/>
</dbReference>
<dbReference type="InterPro" id="IPR041095">
    <property type="entry name" value="EFG_II"/>
</dbReference>
<dbReference type="InterPro" id="IPR035647">
    <property type="entry name" value="EFG_III/V"/>
</dbReference>
<dbReference type="InterPro" id="IPR000640">
    <property type="entry name" value="EFG_V-like"/>
</dbReference>
<dbReference type="InterPro" id="IPR031157">
    <property type="entry name" value="G_TR_CS"/>
</dbReference>
<dbReference type="InterPro" id="IPR027417">
    <property type="entry name" value="P-loop_NTPase"/>
</dbReference>
<dbReference type="InterPro" id="IPR020568">
    <property type="entry name" value="Ribosomal_Su5_D2-typ_SF"/>
</dbReference>
<dbReference type="InterPro" id="IPR014721">
    <property type="entry name" value="Ribsml_uS5_D2-typ_fold_subgr"/>
</dbReference>
<dbReference type="InterPro" id="IPR005225">
    <property type="entry name" value="Small_GTP-bd"/>
</dbReference>
<dbReference type="InterPro" id="IPR000795">
    <property type="entry name" value="T_Tr_GTP-bd_dom"/>
</dbReference>
<dbReference type="InterPro" id="IPR035650">
    <property type="entry name" value="Tet_C"/>
</dbReference>
<dbReference type="InterPro" id="IPR009000">
    <property type="entry name" value="Transl_B-barrel_sf"/>
</dbReference>
<dbReference type="InterPro" id="IPR005517">
    <property type="entry name" value="Transl_elong_EFG/EF2_IV"/>
</dbReference>
<dbReference type="NCBIfam" id="TIGR00231">
    <property type="entry name" value="small_GTP"/>
    <property type="match status" value="1"/>
</dbReference>
<dbReference type="NCBIfam" id="NF012153">
    <property type="entry name" value="tet_protect"/>
    <property type="match status" value="1"/>
</dbReference>
<dbReference type="NCBIfam" id="NF012154">
    <property type="entry name" value="tet_protect_Q"/>
    <property type="match status" value="1"/>
</dbReference>
<dbReference type="PANTHER" id="PTHR43261:SF1">
    <property type="entry name" value="RIBOSOME-RELEASING FACTOR 2, MITOCHONDRIAL"/>
    <property type="match status" value="1"/>
</dbReference>
<dbReference type="PANTHER" id="PTHR43261">
    <property type="entry name" value="TRANSLATION ELONGATION FACTOR G-RELATED"/>
    <property type="match status" value="1"/>
</dbReference>
<dbReference type="Pfam" id="PF00679">
    <property type="entry name" value="EFG_C"/>
    <property type="match status" value="1"/>
</dbReference>
<dbReference type="Pfam" id="PF14492">
    <property type="entry name" value="EFG_III"/>
    <property type="match status" value="1"/>
</dbReference>
<dbReference type="Pfam" id="PF03764">
    <property type="entry name" value="EFG_IV"/>
    <property type="match status" value="1"/>
</dbReference>
<dbReference type="Pfam" id="PF00009">
    <property type="entry name" value="GTP_EFTU"/>
    <property type="match status" value="1"/>
</dbReference>
<dbReference type="PRINTS" id="PR00315">
    <property type="entry name" value="ELONGATNFCT"/>
</dbReference>
<dbReference type="PRINTS" id="PR01037">
    <property type="entry name" value="TCRTETOQM"/>
</dbReference>
<dbReference type="SMART" id="SM00838">
    <property type="entry name" value="EFG_C"/>
    <property type="match status" value="1"/>
</dbReference>
<dbReference type="SMART" id="SM00889">
    <property type="entry name" value="EFG_IV"/>
    <property type="match status" value="1"/>
</dbReference>
<dbReference type="SUPFAM" id="SSF54980">
    <property type="entry name" value="EF-G C-terminal domain-like"/>
    <property type="match status" value="2"/>
</dbReference>
<dbReference type="SUPFAM" id="SSF52540">
    <property type="entry name" value="P-loop containing nucleoside triphosphate hydrolases"/>
    <property type="match status" value="1"/>
</dbReference>
<dbReference type="SUPFAM" id="SSF54211">
    <property type="entry name" value="Ribosomal protein S5 domain 2-like"/>
    <property type="match status" value="1"/>
</dbReference>
<dbReference type="SUPFAM" id="SSF50447">
    <property type="entry name" value="Translation proteins"/>
    <property type="match status" value="1"/>
</dbReference>
<dbReference type="PROSITE" id="PS00301">
    <property type="entry name" value="G_TR_1"/>
    <property type="match status" value="1"/>
</dbReference>
<dbReference type="PROSITE" id="PS51722">
    <property type="entry name" value="G_TR_2"/>
    <property type="match status" value="1"/>
</dbReference>
<gene>
    <name type="primary">tetQ</name>
</gene>
<accession>Q52360</accession>
<organism>
    <name type="scientific">Xylanibacter ruminicola</name>
    <name type="common">Prevotella ruminicola</name>
    <dbReference type="NCBI Taxonomy" id="839"/>
    <lineage>
        <taxon>Bacteria</taxon>
        <taxon>Pseudomonadati</taxon>
        <taxon>Bacteroidota</taxon>
        <taxon>Bacteroidia</taxon>
        <taxon>Bacteroidales</taxon>
        <taxon>Prevotellaceae</taxon>
        <taxon>Xylanibacter</taxon>
    </lineage>
</organism>
<comment type="function">
    <text>Abolishes the inhibitory effect of tetracyclin on protein synthesis by a non-covalent modification of the ribosomes.</text>
</comment>
<comment type="similarity">
    <text evidence="2">Belongs to the TRAFAC class translation factor GTPase superfamily. Classic translation factor GTPase family. TetM/TetO subfamily.</text>
</comment>
<protein>
    <recommendedName>
        <fullName>Tetracycline resistance protein TetQ</fullName>
        <shortName>Tet(Q)</shortName>
    </recommendedName>
</protein>
<reference key="1">
    <citation type="journal article" date="1994" name="Appl. Environ. Microbiol.">
        <title>Evidence for natural horizontal transfer of tetQ between bacteria that normally colonize humans and bacteria that normally colonize livestock.</title>
        <authorList>
            <person name="Nikolich M.P."/>
            <person name="Hong G."/>
            <person name="Shoemaker N.B."/>
            <person name="Salyers A.A."/>
        </authorList>
    </citation>
    <scope>NUCLEOTIDE SEQUENCE [GENOMIC DNA]</scope>
    <source>
        <strain>223</strain>
    </source>
</reference>
<name>TETQ_XYLRU</name>
<proteinExistence type="inferred from homology"/>
<sequence length="641" mass="72270">MNIINLGILAHIDAGKTSVTENLLFASGATEKCGRVDNGDTITDSMDIEKRRGITVRASTTSIIWNGVKCNIIDTPGHMDFIAEVERTFKMLDGAVLILSAKEGIQAQTKLLFSTLQKLQIPTIIFINKIDRAGVNLERLYMDIKTNLSQDVLFMQTVVDGSVYPVCSQTYIKEEYKEFVCNHDDDILERYLADSEISPADYWNTIIALVAKAKVYPVLHGSAMFNIGINELLDAITSFILPPASVSNRLSAYLYKIEHDPKGHKRSFLKIIDGSLRLRDVVRINDSEKFIKIKNLKTIYQGREINVDEVGANDIAIVEDIEDFRIGDYLGAKPCLIQGLSHQHPALKCSVRPNKPEERSKVISALNTLWIEDPSLSFSINSYSDELEISLYGLTQKEIIQTLLEERFSVKVHFDEIKTIYKERPIKKVNKIIQIEVPPNPYWATIGLTLEPLPLGAGLQIESDISYGYLNHSFQNAVFEGIRMSCQSGLHGWEVTDLKVTFTQAEYYSPVSTPADFRQLTPYVFRLALQQSGVDILEPMLCFELQIPQVASSKAITDLQKMMSEIEDISCNNEWCHIKGKVPLNTSKDYASEVSSYTKGLGIFMVKPCGYQITKDGYSDNIRMNEKDKLLFMFQKSMSLK</sequence>
<feature type="chain" id="PRO_0000091513" description="Tetracycline resistance protein TetQ">
    <location>
        <begin position="1"/>
        <end position="641"/>
    </location>
</feature>
<feature type="domain" description="tr-type G" evidence="2">
    <location>
        <begin position="1"/>
        <end position="244"/>
    </location>
</feature>
<feature type="binding site" evidence="1">
    <location>
        <begin position="10"/>
        <end position="17"/>
    </location>
    <ligand>
        <name>GTP</name>
        <dbReference type="ChEBI" id="CHEBI:37565"/>
    </ligand>
</feature>
<feature type="binding site" evidence="1">
    <location>
        <begin position="74"/>
        <end position="78"/>
    </location>
    <ligand>
        <name>GTP</name>
        <dbReference type="ChEBI" id="CHEBI:37565"/>
    </ligand>
</feature>
<feature type="binding site" evidence="1">
    <location>
        <begin position="128"/>
        <end position="131"/>
    </location>
    <ligand>
        <name>GTP</name>
        <dbReference type="ChEBI" id="CHEBI:37565"/>
    </ligand>
</feature>